<accession>A1AAH3</accession>
<gene>
    <name evidence="1" type="primary">clsA</name>
    <name type="synonym">cls</name>
    <name type="ordered locus">Ecok1_11690</name>
    <name type="ORF">APECO1_364</name>
</gene>
<protein>
    <recommendedName>
        <fullName evidence="1">Cardiolipin synthase A</fullName>
        <shortName evidence="1">CL synthase</shortName>
        <ecNumber evidence="1">2.7.8.-</ecNumber>
    </recommendedName>
</protein>
<feature type="chain" id="PRO_1000058483" description="Cardiolipin synthase A">
    <location>
        <begin position="1"/>
        <end position="486"/>
    </location>
</feature>
<feature type="transmembrane region" description="Helical" evidence="1">
    <location>
        <begin position="3"/>
        <end position="23"/>
    </location>
</feature>
<feature type="transmembrane region" description="Helical" evidence="1">
    <location>
        <begin position="38"/>
        <end position="58"/>
    </location>
</feature>
<feature type="domain" description="PLD phosphodiesterase 1" evidence="1">
    <location>
        <begin position="219"/>
        <end position="246"/>
    </location>
</feature>
<feature type="domain" description="PLD phosphodiesterase 2" evidence="1">
    <location>
        <begin position="399"/>
        <end position="426"/>
    </location>
</feature>
<feature type="active site" evidence="1">
    <location>
        <position position="224"/>
    </location>
</feature>
<feature type="active site" evidence="1">
    <location>
        <position position="226"/>
    </location>
</feature>
<feature type="active site" evidence="1">
    <location>
        <position position="231"/>
    </location>
</feature>
<feature type="active site" evidence="1">
    <location>
        <position position="404"/>
    </location>
</feature>
<feature type="active site" evidence="1">
    <location>
        <position position="406"/>
    </location>
</feature>
<feature type="active site" evidence="1">
    <location>
        <position position="411"/>
    </location>
</feature>
<keyword id="KW-0997">Cell inner membrane</keyword>
<keyword id="KW-1003">Cell membrane</keyword>
<keyword id="KW-0444">Lipid biosynthesis</keyword>
<keyword id="KW-0443">Lipid metabolism</keyword>
<keyword id="KW-0472">Membrane</keyword>
<keyword id="KW-0594">Phospholipid biosynthesis</keyword>
<keyword id="KW-1208">Phospholipid metabolism</keyword>
<keyword id="KW-1185">Reference proteome</keyword>
<keyword id="KW-0677">Repeat</keyword>
<keyword id="KW-0808">Transferase</keyword>
<keyword id="KW-0812">Transmembrane</keyword>
<keyword id="KW-1133">Transmembrane helix</keyword>
<sequence length="486" mass="54822">MTTVYTLVSWLAILGYWLLIAGVTLRILMKRRAVPSAMAWLLIIYILPLVGIIAYLAVGELHLGKRRAERARAMWPSTAKWLNDLKACKHIFAEENSSVAAPLFKLCERRQGIAGVKGNQLQLMTESDDVMQALIRDIQLARHNIEMVFYIWQPGGMADQVAESLMAAARRGIHCRLMLDSAGSVAFFRSPWPELMRNAGIEVVEALKVNLMRVFLRRMDLRQHRKMIMIDNYIAYTGSMNMVDPRYFKQDAGVGQWIDLMARMEGPIATAMGIIYSCDWEIETGKRILPPPPDVNIMPFEQASGHTIHTIASGPGFPEDLIHQALLTAAYSAREYLIMTTPYFVPSDDLLHAICTAAQRGVDVSIILPRKNDSMLVGWASRAFFTELLAAGVKIYQFEGGLLHTKSVLVDGELSLVGTVNLDMRSLWLNFEITLAIDDKGFGADLAAVQDDYISRSRLLDARLWLKRPLWQRVAERLFYFFSPLL</sequence>
<organism>
    <name type="scientific">Escherichia coli O1:K1 / APEC</name>
    <dbReference type="NCBI Taxonomy" id="405955"/>
    <lineage>
        <taxon>Bacteria</taxon>
        <taxon>Pseudomonadati</taxon>
        <taxon>Pseudomonadota</taxon>
        <taxon>Gammaproteobacteria</taxon>
        <taxon>Enterobacterales</taxon>
        <taxon>Enterobacteriaceae</taxon>
        <taxon>Escherichia</taxon>
    </lineage>
</organism>
<reference key="1">
    <citation type="journal article" date="2007" name="J. Bacteriol.">
        <title>The genome sequence of avian pathogenic Escherichia coli strain O1:K1:H7 shares strong similarities with human extraintestinal pathogenic E. coli genomes.</title>
        <authorList>
            <person name="Johnson T.J."/>
            <person name="Kariyawasam S."/>
            <person name="Wannemuehler Y."/>
            <person name="Mangiamele P."/>
            <person name="Johnson S.J."/>
            <person name="Doetkott C."/>
            <person name="Skyberg J.A."/>
            <person name="Lynne A.M."/>
            <person name="Johnson J.R."/>
            <person name="Nolan L.K."/>
        </authorList>
    </citation>
    <scope>NUCLEOTIDE SEQUENCE [LARGE SCALE GENOMIC DNA]</scope>
</reference>
<name>CLSA_ECOK1</name>
<proteinExistence type="inferred from homology"/>
<dbReference type="EC" id="2.7.8.-" evidence="1"/>
<dbReference type="EMBL" id="CP000468">
    <property type="protein sequence ID" value="ABJ00663.1"/>
    <property type="molecule type" value="Genomic_DNA"/>
</dbReference>
<dbReference type="RefSeq" id="WP_000214516.1">
    <property type="nucleotide sequence ID" value="NZ_CADILS010000001.1"/>
</dbReference>
<dbReference type="SMR" id="A1AAH3"/>
<dbReference type="GeneID" id="93775314"/>
<dbReference type="KEGG" id="ecv:APECO1_364"/>
<dbReference type="HOGENOM" id="CLU_038053_1_0_6"/>
<dbReference type="Proteomes" id="UP000008216">
    <property type="component" value="Chromosome"/>
</dbReference>
<dbReference type="GO" id="GO:0005886">
    <property type="term" value="C:plasma membrane"/>
    <property type="evidence" value="ECO:0007669"/>
    <property type="project" value="UniProtKB-SubCell"/>
</dbReference>
<dbReference type="GO" id="GO:0008808">
    <property type="term" value="F:cardiolipin synthase activity"/>
    <property type="evidence" value="ECO:0007669"/>
    <property type="project" value="InterPro"/>
</dbReference>
<dbReference type="GO" id="GO:0032049">
    <property type="term" value="P:cardiolipin biosynthetic process"/>
    <property type="evidence" value="ECO:0007669"/>
    <property type="project" value="InterPro"/>
</dbReference>
<dbReference type="CDD" id="cd09152">
    <property type="entry name" value="PLDc_EcCLS_like_1"/>
    <property type="match status" value="1"/>
</dbReference>
<dbReference type="CDD" id="cd09158">
    <property type="entry name" value="PLDc_EcCLS_like_2"/>
    <property type="match status" value="1"/>
</dbReference>
<dbReference type="FunFam" id="3.30.870.10:FF:000002">
    <property type="entry name" value="Cardiolipin synthase A"/>
    <property type="match status" value="1"/>
</dbReference>
<dbReference type="FunFam" id="3.30.870.10:FF:000003">
    <property type="entry name" value="Cardiolipin synthase A"/>
    <property type="match status" value="1"/>
</dbReference>
<dbReference type="Gene3D" id="3.30.870.10">
    <property type="entry name" value="Endonuclease Chain A"/>
    <property type="match status" value="2"/>
</dbReference>
<dbReference type="HAMAP" id="MF_00190">
    <property type="entry name" value="Cardiolipin_synth_ClsA"/>
    <property type="match status" value="1"/>
</dbReference>
<dbReference type="InterPro" id="IPR022924">
    <property type="entry name" value="Cardiolipin_synthase"/>
</dbReference>
<dbReference type="InterPro" id="IPR030840">
    <property type="entry name" value="CL_synthase_A"/>
</dbReference>
<dbReference type="InterPro" id="IPR027379">
    <property type="entry name" value="CLS_N"/>
</dbReference>
<dbReference type="InterPro" id="IPR025202">
    <property type="entry name" value="PLD-like_dom"/>
</dbReference>
<dbReference type="InterPro" id="IPR001736">
    <property type="entry name" value="PLipase_D/transphosphatidylase"/>
</dbReference>
<dbReference type="NCBIfam" id="TIGR04265">
    <property type="entry name" value="bac_cardiolipin"/>
    <property type="match status" value="1"/>
</dbReference>
<dbReference type="PANTHER" id="PTHR21248">
    <property type="entry name" value="CARDIOLIPIN SYNTHASE"/>
    <property type="match status" value="1"/>
</dbReference>
<dbReference type="PANTHER" id="PTHR21248:SF22">
    <property type="entry name" value="PHOSPHOLIPASE D"/>
    <property type="match status" value="1"/>
</dbReference>
<dbReference type="Pfam" id="PF13091">
    <property type="entry name" value="PLDc_2"/>
    <property type="match status" value="2"/>
</dbReference>
<dbReference type="Pfam" id="PF13396">
    <property type="entry name" value="PLDc_N"/>
    <property type="match status" value="1"/>
</dbReference>
<dbReference type="SMART" id="SM00155">
    <property type="entry name" value="PLDc"/>
    <property type="match status" value="2"/>
</dbReference>
<dbReference type="SUPFAM" id="SSF56024">
    <property type="entry name" value="Phospholipase D/nuclease"/>
    <property type="match status" value="2"/>
</dbReference>
<dbReference type="PROSITE" id="PS50035">
    <property type="entry name" value="PLD"/>
    <property type="match status" value="2"/>
</dbReference>
<comment type="function">
    <text evidence="1">Catalyzes the reversible phosphatidyl group transfer from one phosphatidylglycerol molecule to another to form cardiolipin (CL) (diphosphatidylglycerol) and glycerol.</text>
</comment>
<comment type="catalytic activity">
    <reaction evidence="1">
        <text>2 a 1,2-diacyl-sn-glycero-3-phospho-(1'-sn-glycerol) = a cardiolipin + glycerol</text>
        <dbReference type="Rhea" id="RHEA:31451"/>
        <dbReference type="ChEBI" id="CHEBI:17754"/>
        <dbReference type="ChEBI" id="CHEBI:62237"/>
        <dbReference type="ChEBI" id="CHEBI:64716"/>
    </reaction>
</comment>
<comment type="subcellular location">
    <subcellularLocation>
        <location evidence="1">Cell inner membrane</location>
        <topology evidence="1">Multi-pass membrane protein</topology>
    </subcellularLocation>
</comment>
<comment type="similarity">
    <text evidence="1">Belongs to the phospholipase D family. Cardiolipin synthase subfamily. ClsA sub-subfamily.</text>
</comment>
<evidence type="ECO:0000255" key="1">
    <source>
        <dbReference type="HAMAP-Rule" id="MF_00190"/>
    </source>
</evidence>